<dbReference type="EMBL" id="AK004090">
    <property type="protein sequence ID" value="BAB23163.1"/>
    <property type="molecule type" value="mRNA"/>
</dbReference>
<dbReference type="EMBL" id="AL935270">
    <property type="status" value="NOT_ANNOTATED_CDS"/>
    <property type="molecule type" value="Genomic_DNA"/>
</dbReference>
<dbReference type="EMBL" id="BC100475">
    <property type="protein sequence ID" value="AAI00476.1"/>
    <property type="molecule type" value="mRNA"/>
</dbReference>
<dbReference type="CCDS" id="CCDS50727.1"/>
<dbReference type="RefSeq" id="NP_001345189.1">
    <property type="nucleotide sequence ID" value="NM_001358260.2"/>
</dbReference>
<dbReference type="RefSeq" id="NP_001345190.1">
    <property type="nucleotide sequence ID" value="NM_001358261.2"/>
</dbReference>
<dbReference type="RefSeq" id="NP_082913.1">
    <property type="nucleotide sequence ID" value="NM_028637.3"/>
</dbReference>
<dbReference type="RefSeq" id="XP_011238102.1">
    <property type="nucleotide sequence ID" value="XM_011239800.2"/>
</dbReference>
<dbReference type="RefSeq" id="XP_011238103.1">
    <property type="nucleotide sequence ID" value="XM_011239801.2"/>
</dbReference>
<dbReference type="RefSeq" id="XP_011238104.1">
    <property type="nucleotide sequence ID" value="XM_011239802.3"/>
</dbReference>
<dbReference type="RefSeq" id="XP_011238105.1">
    <property type="nucleotide sequence ID" value="XM_011239803.1"/>
</dbReference>
<dbReference type="RefSeq" id="XP_036018514.1">
    <property type="nucleotide sequence ID" value="XM_036162621.1"/>
</dbReference>
<dbReference type="SMR" id="Q9D112"/>
<dbReference type="BioGRID" id="216227">
    <property type="interactions" value="2"/>
</dbReference>
<dbReference type="ComplexPortal" id="CPX-3483">
    <property type="entry name" value="Shieldin complex"/>
</dbReference>
<dbReference type="FunCoup" id="Q9D112">
    <property type="interactions" value="63"/>
</dbReference>
<dbReference type="STRING" id="10090.ENSMUSP00000105759"/>
<dbReference type="GlyGen" id="Q9D112">
    <property type="glycosylation" value="2 sites"/>
</dbReference>
<dbReference type="PhosphoSitePlus" id="Q9D112"/>
<dbReference type="PaxDb" id="10090-ENSMUSP00000105759"/>
<dbReference type="Antibodypedia" id="49253">
    <property type="antibodies" value="63 antibodies from 10 providers"/>
</dbReference>
<dbReference type="DNASU" id="73747"/>
<dbReference type="Ensembl" id="ENSMUST00000061891.11">
    <property type="protein sequence ID" value="ENSMUSP00000057009.5"/>
    <property type="gene ID" value="ENSMUSG00000044991.11"/>
</dbReference>
<dbReference type="Ensembl" id="ENSMUST00000110132.3">
    <property type="protein sequence ID" value="ENSMUSP00000105759.3"/>
    <property type="gene ID" value="ENSMUSG00000044991.11"/>
</dbReference>
<dbReference type="GeneID" id="73747"/>
<dbReference type="KEGG" id="mmu:73747"/>
<dbReference type="UCSC" id="uc008mne.2">
    <property type="organism name" value="mouse"/>
</dbReference>
<dbReference type="AGR" id="MGI:1920997"/>
<dbReference type="CTD" id="149840"/>
<dbReference type="MGI" id="MGI:1920997">
    <property type="gene designation" value="Shld1"/>
</dbReference>
<dbReference type="VEuPathDB" id="HostDB:ENSMUSG00000044991"/>
<dbReference type="eggNOG" id="ENOG502SUXK">
    <property type="taxonomic scope" value="Eukaryota"/>
</dbReference>
<dbReference type="GeneTree" id="ENSGT00390000014969"/>
<dbReference type="HOGENOM" id="CLU_090358_0_0_1"/>
<dbReference type="InParanoid" id="Q9D112"/>
<dbReference type="OMA" id="NHPTTAC"/>
<dbReference type="OrthoDB" id="9446682at2759"/>
<dbReference type="PhylomeDB" id="Q9D112"/>
<dbReference type="TreeFam" id="TF336046"/>
<dbReference type="BioGRID-ORCS" id="73747">
    <property type="hits" value="0 hits in 76 CRISPR screens"/>
</dbReference>
<dbReference type="PRO" id="PR:Q9D112"/>
<dbReference type="Proteomes" id="UP000000589">
    <property type="component" value="Chromosome 2"/>
</dbReference>
<dbReference type="RNAct" id="Q9D112">
    <property type="molecule type" value="protein"/>
</dbReference>
<dbReference type="Bgee" id="ENSMUSG00000044991">
    <property type="expression patterns" value="Expressed in interventricular septum and 220 other cell types or tissues"/>
</dbReference>
<dbReference type="ExpressionAtlas" id="Q9D112">
    <property type="expression patterns" value="baseline and differential"/>
</dbReference>
<dbReference type="GO" id="GO:0000785">
    <property type="term" value="C:chromatin"/>
    <property type="evidence" value="ECO:0000303"/>
    <property type="project" value="ComplexPortal"/>
</dbReference>
<dbReference type="GO" id="GO:0035861">
    <property type="term" value="C:site of double-strand break"/>
    <property type="evidence" value="ECO:0000303"/>
    <property type="project" value="ComplexPortal"/>
</dbReference>
<dbReference type="GO" id="GO:0006281">
    <property type="term" value="P:DNA repair"/>
    <property type="evidence" value="ECO:0007669"/>
    <property type="project" value="UniProtKB-KW"/>
</dbReference>
<dbReference type="GO" id="GO:2000042">
    <property type="term" value="P:negative regulation of double-strand break repair via homologous recombination"/>
    <property type="evidence" value="ECO:0007669"/>
    <property type="project" value="Ensembl"/>
</dbReference>
<dbReference type="GO" id="GO:2001034">
    <property type="term" value="P:positive regulation of double-strand break repair via nonhomologous end joining"/>
    <property type="evidence" value="ECO:0000303"/>
    <property type="project" value="ComplexPortal"/>
</dbReference>
<dbReference type="GO" id="GO:0045830">
    <property type="term" value="P:positive regulation of isotype switching"/>
    <property type="evidence" value="ECO:0007669"/>
    <property type="project" value="Ensembl"/>
</dbReference>
<dbReference type="GO" id="GO:0002208">
    <property type="term" value="P:somatic diversification of immunoglobulins involved in immune response"/>
    <property type="evidence" value="ECO:0000303"/>
    <property type="project" value="ComplexPortal"/>
</dbReference>
<dbReference type="GO" id="GO:0043247">
    <property type="term" value="P:telomere maintenance in response to DNA damage"/>
    <property type="evidence" value="ECO:0000303"/>
    <property type="project" value="ComplexPortal"/>
</dbReference>
<dbReference type="InterPro" id="IPR027821">
    <property type="entry name" value="SHLD1"/>
</dbReference>
<dbReference type="InterPro" id="IPR053898">
    <property type="entry name" value="SHLD1_C"/>
</dbReference>
<dbReference type="PANTHER" id="PTHR36863">
    <property type="entry name" value="SHIELDIN COMPLEX SUBUNIT 1"/>
    <property type="match status" value="1"/>
</dbReference>
<dbReference type="PANTHER" id="PTHR36863:SF1">
    <property type="entry name" value="SHIELDIN COMPLEX SUBUNIT 1"/>
    <property type="match status" value="1"/>
</dbReference>
<dbReference type="Pfam" id="PF15021">
    <property type="entry name" value="SHLD1_C"/>
    <property type="match status" value="1"/>
</dbReference>
<protein>
    <recommendedName>
        <fullName evidence="1">Shieldin complex subunit 1</fullName>
    </recommendedName>
    <alternativeName>
        <fullName evidence="1">RINN1-REV7-interacting novel NHEJ regulator 3</fullName>
    </alternativeName>
</protein>
<sequence>MESQAATPSSLSGESCTLDLPAVCDTSSYEASQRVSQGSSNSLSSLESHPFLSSSTTDPDSNSLNTEQKGSWDSENFWLDPSSKGQLETNEEEDGLRKSLDRFYEAFAHPLPGSGDPLSASVCQCLSQTISELEGQESQRYALRSFQMAQVIFSRDGCSILQRHSRDTRFYPLEQEGSSVDDEEPTPGLSREVIRFLLEQTVMKDS</sequence>
<comment type="function">
    <text evidence="1">Component of the shieldin complex, which plays an important role in repair of DNA double-stranded breaks (DSBs). During G1 and S phase of the cell cycle, the complex functions downstream of TP53BP1 to promote non-homologous end joining (NHEJ) and suppress DNA end resection. Mediates various NHEJ-dependent processes including immunoglobulin class-switch recombination, and fusion of unprotected telomeres.</text>
</comment>
<comment type="subunit">
    <text evidence="1">Component of the shieldin complex, consisting of SHLD1, SHLD2, SHLD3 and MAD2L2/REV7. Within the complex, SHLD2 forms a scaffold which interacts with a SHLD3-MAD2L2 subcomplex via its N-terminus, and with SHLD1 via its C-terminus. Interacts with ASTE1.</text>
</comment>
<comment type="subcellular location">
    <subcellularLocation>
        <location evidence="1">Chromosome</location>
    </subcellularLocation>
</comment>
<keyword id="KW-0158">Chromosome</keyword>
<keyword id="KW-0227">DNA damage</keyword>
<keyword id="KW-0234">DNA repair</keyword>
<keyword id="KW-1185">Reference proteome</keyword>
<reference key="1">
    <citation type="journal article" date="2005" name="Science">
        <title>The transcriptional landscape of the mammalian genome.</title>
        <authorList>
            <person name="Carninci P."/>
            <person name="Kasukawa T."/>
            <person name="Katayama S."/>
            <person name="Gough J."/>
            <person name="Frith M.C."/>
            <person name="Maeda N."/>
            <person name="Oyama R."/>
            <person name="Ravasi T."/>
            <person name="Lenhard B."/>
            <person name="Wells C."/>
            <person name="Kodzius R."/>
            <person name="Shimokawa K."/>
            <person name="Bajic V.B."/>
            <person name="Brenner S.E."/>
            <person name="Batalov S."/>
            <person name="Forrest A.R."/>
            <person name="Zavolan M."/>
            <person name="Davis M.J."/>
            <person name="Wilming L.G."/>
            <person name="Aidinis V."/>
            <person name="Allen J.E."/>
            <person name="Ambesi-Impiombato A."/>
            <person name="Apweiler R."/>
            <person name="Aturaliya R.N."/>
            <person name="Bailey T.L."/>
            <person name="Bansal M."/>
            <person name="Baxter L."/>
            <person name="Beisel K.W."/>
            <person name="Bersano T."/>
            <person name="Bono H."/>
            <person name="Chalk A.M."/>
            <person name="Chiu K.P."/>
            <person name="Choudhary V."/>
            <person name="Christoffels A."/>
            <person name="Clutterbuck D.R."/>
            <person name="Crowe M.L."/>
            <person name="Dalla E."/>
            <person name="Dalrymple B.P."/>
            <person name="de Bono B."/>
            <person name="Della Gatta G."/>
            <person name="di Bernardo D."/>
            <person name="Down T."/>
            <person name="Engstrom P."/>
            <person name="Fagiolini M."/>
            <person name="Faulkner G."/>
            <person name="Fletcher C.F."/>
            <person name="Fukushima T."/>
            <person name="Furuno M."/>
            <person name="Futaki S."/>
            <person name="Gariboldi M."/>
            <person name="Georgii-Hemming P."/>
            <person name="Gingeras T.R."/>
            <person name="Gojobori T."/>
            <person name="Green R.E."/>
            <person name="Gustincich S."/>
            <person name="Harbers M."/>
            <person name="Hayashi Y."/>
            <person name="Hensch T.K."/>
            <person name="Hirokawa N."/>
            <person name="Hill D."/>
            <person name="Huminiecki L."/>
            <person name="Iacono M."/>
            <person name="Ikeo K."/>
            <person name="Iwama A."/>
            <person name="Ishikawa T."/>
            <person name="Jakt M."/>
            <person name="Kanapin A."/>
            <person name="Katoh M."/>
            <person name="Kawasawa Y."/>
            <person name="Kelso J."/>
            <person name="Kitamura H."/>
            <person name="Kitano H."/>
            <person name="Kollias G."/>
            <person name="Krishnan S.P."/>
            <person name="Kruger A."/>
            <person name="Kummerfeld S.K."/>
            <person name="Kurochkin I.V."/>
            <person name="Lareau L.F."/>
            <person name="Lazarevic D."/>
            <person name="Lipovich L."/>
            <person name="Liu J."/>
            <person name="Liuni S."/>
            <person name="McWilliam S."/>
            <person name="Madan Babu M."/>
            <person name="Madera M."/>
            <person name="Marchionni L."/>
            <person name="Matsuda H."/>
            <person name="Matsuzawa S."/>
            <person name="Miki H."/>
            <person name="Mignone F."/>
            <person name="Miyake S."/>
            <person name="Morris K."/>
            <person name="Mottagui-Tabar S."/>
            <person name="Mulder N."/>
            <person name="Nakano N."/>
            <person name="Nakauchi H."/>
            <person name="Ng P."/>
            <person name="Nilsson R."/>
            <person name="Nishiguchi S."/>
            <person name="Nishikawa S."/>
            <person name="Nori F."/>
            <person name="Ohara O."/>
            <person name="Okazaki Y."/>
            <person name="Orlando V."/>
            <person name="Pang K.C."/>
            <person name="Pavan W.J."/>
            <person name="Pavesi G."/>
            <person name="Pesole G."/>
            <person name="Petrovsky N."/>
            <person name="Piazza S."/>
            <person name="Reed J."/>
            <person name="Reid J.F."/>
            <person name="Ring B.Z."/>
            <person name="Ringwald M."/>
            <person name="Rost B."/>
            <person name="Ruan Y."/>
            <person name="Salzberg S.L."/>
            <person name="Sandelin A."/>
            <person name="Schneider C."/>
            <person name="Schoenbach C."/>
            <person name="Sekiguchi K."/>
            <person name="Semple C.A."/>
            <person name="Seno S."/>
            <person name="Sessa L."/>
            <person name="Sheng Y."/>
            <person name="Shibata Y."/>
            <person name="Shimada H."/>
            <person name="Shimada K."/>
            <person name="Silva D."/>
            <person name="Sinclair B."/>
            <person name="Sperling S."/>
            <person name="Stupka E."/>
            <person name="Sugiura K."/>
            <person name="Sultana R."/>
            <person name="Takenaka Y."/>
            <person name="Taki K."/>
            <person name="Tammoja K."/>
            <person name="Tan S.L."/>
            <person name="Tang S."/>
            <person name="Taylor M.S."/>
            <person name="Tegner J."/>
            <person name="Teichmann S.A."/>
            <person name="Ueda H.R."/>
            <person name="van Nimwegen E."/>
            <person name="Verardo R."/>
            <person name="Wei C.L."/>
            <person name="Yagi K."/>
            <person name="Yamanishi H."/>
            <person name="Zabarovsky E."/>
            <person name="Zhu S."/>
            <person name="Zimmer A."/>
            <person name="Hide W."/>
            <person name="Bult C."/>
            <person name="Grimmond S.M."/>
            <person name="Teasdale R.D."/>
            <person name="Liu E.T."/>
            <person name="Brusic V."/>
            <person name="Quackenbush J."/>
            <person name="Wahlestedt C."/>
            <person name="Mattick J.S."/>
            <person name="Hume D.A."/>
            <person name="Kai C."/>
            <person name="Sasaki D."/>
            <person name="Tomaru Y."/>
            <person name="Fukuda S."/>
            <person name="Kanamori-Katayama M."/>
            <person name="Suzuki M."/>
            <person name="Aoki J."/>
            <person name="Arakawa T."/>
            <person name="Iida J."/>
            <person name="Imamura K."/>
            <person name="Itoh M."/>
            <person name="Kato T."/>
            <person name="Kawaji H."/>
            <person name="Kawagashira N."/>
            <person name="Kawashima T."/>
            <person name="Kojima M."/>
            <person name="Kondo S."/>
            <person name="Konno H."/>
            <person name="Nakano K."/>
            <person name="Ninomiya N."/>
            <person name="Nishio T."/>
            <person name="Okada M."/>
            <person name="Plessy C."/>
            <person name="Shibata K."/>
            <person name="Shiraki T."/>
            <person name="Suzuki S."/>
            <person name="Tagami M."/>
            <person name="Waki K."/>
            <person name="Watahiki A."/>
            <person name="Okamura-Oho Y."/>
            <person name="Suzuki H."/>
            <person name="Kawai J."/>
            <person name="Hayashizaki Y."/>
        </authorList>
    </citation>
    <scope>NUCLEOTIDE SEQUENCE [LARGE SCALE MRNA]</scope>
    <source>
        <strain>C57BL/6J</strain>
    </source>
</reference>
<reference key="2">
    <citation type="journal article" date="2009" name="PLoS Biol.">
        <title>Lineage-specific biology revealed by a finished genome assembly of the mouse.</title>
        <authorList>
            <person name="Church D.M."/>
            <person name="Goodstadt L."/>
            <person name="Hillier L.W."/>
            <person name="Zody M.C."/>
            <person name="Goldstein S."/>
            <person name="She X."/>
            <person name="Bult C.J."/>
            <person name="Agarwala R."/>
            <person name="Cherry J.L."/>
            <person name="DiCuccio M."/>
            <person name="Hlavina W."/>
            <person name="Kapustin Y."/>
            <person name="Meric P."/>
            <person name="Maglott D."/>
            <person name="Birtle Z."/>
            <person name="Marques A.C."/>
            <person name="Graves T."/>
            <person name="Zhou S."/>
            <person name="Teague B."/>
            <person name="Potamousis K."/>
            <person name="Churas C."/>
            <person name="Place M."/>
            <person name="Herschleb J."/>
            <person name="Runnheim R."/>
            <person name="Forrest D."/>
            <person name="Amos-Landgraf J."/>
            <person name="Schwartz D.C."/>
            <person name="Cheng Z."/>
            <person name="Lindblad-Toh K."/>
            <person name="Eichler E.E."/>
            <person name="Ponting C.P."/>
        </authorList>
    </citation>
    <scope>NUCLEOTIDE SEQUENCE [LARGE SCALE GENOMIC DNA]</scope>
    <source>
        <strain>C57BL/6J</strain>
    </source>
</reference>
<reference key="3">
    <citation type="journal article" date="2004" name="Genome Res.">
        <title>The status, quality, and expansion of the NIH full-length cDNA project: the Mammalian Gene Collection (MGC).</title>
        <authorList>
            <consortium name="The MGC Project Team"/>
        </authorList>
    </citation>
    <scope>NUCLEOTIDE SEQUENCE [LARGE SCALE MRNA]</scope>
    <source>
        <tissue>Pituitary</tissue>
    </source>
</reference>
<name>SHLD1_MOUSE</name>
<feature type="chain" id="PRO_0000286613" description="Shieldin complex subunit 1">
    <location>
        <begin position="1"/>
        <end position="206"/>
    </location>
</feature>
<feature type="region of interest" description="Disordered" evidence="2">
    <location>
        <begin position="27"/>
        <end position="94"/>
    </location>
</feature>
<feature type="compositionally biased region" description="Low complexity" evidence="2">
    <location>
        <begin position="32"/>
        <end position="55"/>
    </location>
</feature>
<feature type="compositionally biased region" description="Polar residues" evidence="2">
    <location>
        <begin position="56"/>
        <end position="74"/>
    </location>
</feature>
<organism>
    <name type="scientific">Mus musculus</name>
    <name type="common">Mouse</name>
    <dbReference type="NCBI Taxonomy" id="10090"/>
    <lineage>
        <taxon>Eukaryota</taxon>
        <taxon>Metazoa</taxon>
        <taxon>Chordata</taxon>
        <taxon>Craniata</taxon>
        <taxon>Vertebrata</taxon>
        <taxon>Euteleostomi</taxon>
        <taxon>Mammalia</taxon>
        <taxon>Eutheria</taxon>
        <taxon>Euarchontoglires</taxon>
        <taxon>Glires</taxon>
        <taxon>Rodentia</taxon>
        <taxon>Myomorpha</taxon>
        <taxon>Muroidea</taxon>
        <taxon>Muridae</taxon>
        <taxon>Murinae</taxon>
        <taxon>Mus</taxon>
        <taxon>Mus</taxon>
    </lineage>
</organism>
<proteinExistence type="evidence at transcript level"/>
<gene>
    <name evidence="1" type="primary">Shld1</name>
    <name evidence="1" type="synonym">RINN3</name>
</gene>
<accession>Q9D112</accession>
<accession>A2AW53</accession>
<evidence type="ECO:0000250" key="1">
    <source>
        <dbReference type="UniProtKB" id="Q8IYI0"/>
    </source>
</evidence>
<evidence type="ECO:0000256" key="2">
    <source>
        <dbReference type="SAM" id="MobiDB-lite"/>
    </source>
</evidence>